<comment type="function">
    <text evidence="1">Catalyzes the NADPH-dependent rearrangement and reduction of 1-deoxy-D-xylulose-5-phosphate (DXP) to 2-C-methyl-D-erythritol 4-phosphate (MEP).</text>
</comment>
<comment type="catalytic activity">
    <reaction evidence="1">
        <text>2-C-methyl-D-erythritol 4-phosphate + NADP(+) = 1-deoxy-D-xylulose 5-phosphate + NADPH + H(+)</text>
        <dbReference type="Rhea" id="RHEA:13717"/>
        <dbReference type="ChEBI" id="CHEBI:15378"/>
        <dbReference type="ChEBI" id="CHEBI:57783"/>
        <dbReference type="ChEBI" id="CHEBI:57792"/>
        <dbReference type="ChEBI" id="CHEBI:58262"/>
        <dbReference type="ChEBI" id="CHEBI:58349"/>
        <dbReference type="EC" id="1.1.1.267"/>
    </reaction>
    <physiologicalReaction direction="right-to-left" evidence="1">
        <dbReference type="Rhea" id="RHEA:13719"/>
    </physiologicalReaction>
</comment>
<comment type="cofactor">
    <cofactor evidence="1">
        <name>Mg(2+)</name>
        <dbReference type="ChEBI" id="CHEBI:18420"/>
    </cofactor>
    <cofactor evidence="1">
        <name>Mn(2+)</name>
        <dbReference type="ChEBI" id="CHEBI:29035"/>
    </cofactor>
</comment>
<comment type="pathway">
    <text evidence="1">Isoprenoid biosynthesis; isopentenyl diphosphate biosynthesis via DXP pathway; isopentenyl diphosphate from 1-deoxy-D-xylulose 5-phosphate: step 1/6.</text>
</comment>
<comment type="similarity">
    <text evidence="1">Belongs to the DXR family.</text>
</comment>
<keyword id="KW-0414">Isoprene biosynthesis</keyword>
<keyword id="KW-0464">Manganese</keyword>
<keyword id="KW-0479">Metal-binding</keyword>
<keyword id="KW-0521">NADP</keyword>
<keyword id="KW-0560">Oxidoreductase</keyword>
<feature type="chain" id="PRO_1000020276" description="1-deoxy-D-xylulose 5-phosphate reductoisomerase">
    <location>
        <begin position="1"/>
        <end position="385"/>
    </location>
</feature>
<feature type="binding site" evidence="1">
    <location>
        <position position="11"/>
    </location>
    <ligand>
        <name>NADPH</name>
        <dbReference type="ChEBI" id="CHEBI:57783"/>
    </ligand>
</feature>
<feature type="binding site" evidence="1">
    <location>
        <position position="12"/>
    </location>
    <ligand>
        <name>NADPH</name>
        <dbReference type="ChEBI" id="CHEBI:57783"/>
    </ligand>
</feature>
<feature type="binding site" evidence="1">
    <location>
        <position position="13"/>
    </location>
    <ligand>
        <name>NADPH</name>
        <dbReference type="ChEBI" id="CHEBI:57783"/>
    </ligand>
</feature>
<feature type="binding site" evidence="1">
    <location>
        <position position="14"/>
    </location>
    <ligand>
        <name>NADPH</name>
        <dbReference type="ChEBI" id="CHEBI:57783"/>
    </ligand>
</feature>
<feature type="binding site" evidence="1">
    <location>
        <position position="37"/>
    </location>
    <ligand>
        <name>NADPH</name>
        <dbReference type="ChEBI" id="CHEBI:57783"/>
    </ligand>
</feature>
<feature type="binding site" evidence="1">
    <location>
        <position position="38"/>
    </location>
    <ligand>
        <name>NADPH</name>
        <dbReference type="ChEBI" id="CHEBI:57783"/>
    </ligand>
</feature>
<feature type="binding site" evidence="1">
    <location>
        <position position="39"/>
    </location>
    <ligand>
        <name>NADPH</name>
        <dbReference type="ChEBI" id="CHEBI:57783"/>
    </ligand>
</feature>
<feature type="binding site" evidence="1">
    <location>
        <position position="123"/>
    </location>
    <ligand>
        <name>NADPH</name>
        <dbReference type="ChEBI" id="CHEBI:57783"/>
    </ligand>
</feature>
<feature type="binding site" evidence="1">
    <location>
        <position position="124"/>
    </location>
    <ligand>
        <name>1-deoxy-D-xylulose 5-phosphate</name>
        <dbReference type="ChEBI" id="CHEBI:57792"/>
    </ligand>
</feature>
<feature type="binding site" evidence="1">
    <location>
        <position position="125"/>
    </location>
    <ligand>
        <name>NADPH</name>
        <dbReference type="ChEBI" id="CHEBI:57783"/>
    </ligand>
</feature>
<feature type="binding site" evidence="1">
    <location>
        <position position="149"/>
    </location>
    <ligand>
        <name>Mn(2+)</name>
        <dbReference type="ChEBI" id="CHEBI:29035"/>
    </ligand>
</feature>
<feature type="binding site" evidence="1">
    <location>
        <position position="150"/>
    </location>
    <ligand>
        <name>1-deoxy-D-xylulose 5-phosphate</name>
        <dbReference type="ChEBI" id="CHEBI:57792"/>
    </ligand>
</feature>
<feature type="binding site" evidence="1">
    <location>
        <position position="151"/>
    </location>
    <ligand>
        <name>1-deoxy-D-xylulose 5-phosphate</name>
        <dbReference type="ChEBI" id="CHEBI:57792"/>
    </ligand>
</feature>
<feature type="binding site" evidence="1">
    <location>
        <position position="151"/>
    </location>
    <ligand>
        <name>Mn(2+)</name>
        <dbReference type="ChEBI" id="CHEBI:29035"/>
    </ligand>
</feature>
<feature type="binding site" evidence="1">
    <location>
        <position position="173"/>
    </location>
    <ligand>
        <name>1-deoxy-D-xylulose 5-phosphate</name>
        <dbReference type="ChEBI" id="CHEBI:57792"/>
    </ligand>
</feature>
<feature type="binding site" evidence="1">
    <location>
        <position position="196"/>
    </location>
    <ligand>
        <name>1-deoxy-D-xylulose 5-phosphate</name>
        <dbReference type="ChEBI" id="CHEBI:57792"/>
    </ligand>
</feature>
<feature type="binding site" evidence="1">
    <location>
        <position position="202"/>
    </location>
    <ligand>
        <name>NADPH</name>
        <dbReference type="ChEBI" id="CHEBI:57783"/>
    </ligand>
</feature>
<feature type="binding site" evidence="1">
    <location>
        <position position="209"/>
    </location>
    <ligand>
        <name>1-deoxy-D-xylulose 5-phosphate</name>
        <dbReference type="ChEBI" id="CHEBI:57792"/>
    </ligand>
</feature>
<feature type="binding site" evidence="1">
    <location>
        <position position="214"/>
    </location>
    <ligand>
        <name>1-deoxy-D-xylulose 5-phosphate</name>
        <dbReference type="ChEBI" id="CHEBI:57792"/>
    </ligand>
</feature>
<feature type="binding site" evidence="1">
    <location>
        <position position="215"/>
    </location>
    <ligand>
        <name>1-deoxy-D-xylulose 5-phosphate</name>
        <dbReference type="ChEBI" id="CHEBI:57792"/>
    </ligand>
</feature>
<feature type="binding site" evidence="1">
    <location>
        <position position="218"/>
    </location>
    <ligand>
        <name>1-deoxy-D-xylulose 5-phosphate</name>
        <dbReference type="ChEBI" id="CHEBI:57792"/>
    </ligand>
</feature>
<feature type="binding site" evidence="1">
    <location>
        <position position="218"/>
    </location>
    <ligand>
        <name>Mn(2+)</name>
        <dbReference type="ChEBI" id="CHEBI:29035"/>
    </ligand>
</feature>
<name>DXR_MOOTA</name>
<accession>Q2RJN4</accession>
<organism>
    <name type="scientific">Moorella thermoacetica (strain ATCC 39073 / JCM 9320)</name>
    <dbReference type="NCBI Taxonomy" id="264732"/>
    <lineage>
        <taxon>Bacteria</taxon>
        <taxon>Bacillati</taxon>
        <taxon>Bacillota</taxon>
        <taxon>Clostridia</taxon>
        <taxon>Moorellales</taxon>
        <taxon>Moorellaceae</taxon>
        <taxon>Moorella</taxon>
    </lineage>
</organism>
<gene>
    <name evidence="1" type="primary">dxr</name>
    <name type="ordered locus">Moth_1041</name>
</gene>
<reference key="1">
    <citation type="journal article" date="2008" name="Environ. Microbiol.">
        <title>The complete genome sequence of Moorella thermoacetica (f. Clostridium thermoaceticum).</title>
        <authorList>
            <person name="Pierce E."/>
            <person name="Xie G."/>
            <person name="Barabote R.D."/>
            <person name="Saunders E."/>
            <person name="Han C.S."/>
            <person name="Detter J.C."/>
            <person name="Richardson P."/>
            <person name="Brettin T.S."/>
            <person name="Das A."/>
            <person name="Ljungdahl L.G."/>
            <person name="Ragsdale S.W."/>
        </authorList>
    </citation>
    <scope>NUCLEOTIDE SEQUENCE [LARGE SCALE GENOMIC DNA]</scope>
    <source>
        <strain>ATCC 39073 / JCM 9320</strain>
    </source>
</reference>
<evidence type="ECO:0000255" key="1">
    <source>
        <dbReference type="HAMAP-Rule" id="MF_00183"/>
    </source>
</evidence>
<sequence>MAKEITVLGSTGSIGRQTLEVVAAHPGRFRVAALVAARNDELLAAQVRRFRPRLAVLLDEERARVLAEMVSDPGIRILAGEEGLMAAACLEGVELVVAAMVGIRSLKAILAALEAGKDIALANKEVLVAAGQLVMDRARRLSRQIIPVDSEHSAIFQCLRQGGRVAEVIITASGGPLRQMPRAEMANVTPEQALNHPTWVMGPKITIDSATLMNKGLEVIEAKHLFNLDFDQIKVLIHPQSVVHALVRYSDGALFAQLGPADMRLPIQYALTWPERWDLDVQPLDLAALGHLEFALPDLERFPCLELALQAGRAGGTYPAVLSAADEVAVEYFLAGKITLTAISQVVGRVLDEHQPEPVPDLEGILAADAWARRRAGAVAEGLSF</sequence>
<proteinExistence type="inferred from homology"/>
<dbReference type="EC" id="1.1.1.267" evidence="1"/>
<dbReference type="EMBL" id="CP000232">
    <property type="protein sequence ID" value="ABC19355.1"/>
    <property type="molecule type" value="Genomic_DNA"/>
</dbReference>
<dbReference type="RefSeq" id="YP_429898.1">
    <property type="nucleotide sequence ID" value="NC_007644.1"/>
</dbReference>
<dbReference type="SMR" id="Q2RJN4"/>
<dbReference type="STRING" id="264732.Moth_1041"/>
<dbReference type="EnsemblBacteria" id="ABC19355">
    <property type="protein sequence ID" value="ABC19355"/>
    <property type="gene ID" value="Moth_1041"/>
</dbReference>
<dbReference type="KEGG" id="mta:Moth_1041"/>
<dbReference type="PATRIC" id="fig|264732.11.peg.1121"/>
<dbReference type="eggNOG" id="COG0743">
    <property type="taxonomic scope" value="Bacteria"/>
</dbReference>
<dbReference type="HOGENOM" id="CLU_035714_4_0_9"/>
<dbReference type="OrthoDB" id="9806546at2"/>
<dbReference type="UniPathway" id="UPA00056">
    <property type="reaction ID" value="UER00092"/>
</dbReference>
<dbReference type="GO" id="GO:0030604">
    <property type="term" value="F:1-deoxy-D-xylulose-5-phosphate reductoisomerase activity"/>
    <property type="evidence" value="ECO:0007669"/>
    <property type="project" value="UniProtKB-UniRule"/>
</dbReference>
<dbReference type="GO" id="GO:0030145">
    <property type="term" value="F:manganese ion binding"/>
    <property type="evidence" value="ECO:0007669"/>
    <property type="project" value="TreeGrafter"/>
</dbReference>
<dbReference type="GO" id="GO:0070402">
    <property type="term" value="F:NADPH binding"/>
    <property type="evidence" value="ECO:0007669"/>
    <property type="project" value="InterPro"/>
</dbReference>
<dbReference type="GO" id="GO:0051484">
    <property type="term" value="P:isopentenyl diphosphate biosynthetic process, methylerythritol 4-phosphate pathway involved in terpenoid biosynthetic process"/>
    <property type="evidence" value="ECO:0007669"/>
    <property type="project" value="TreeGrafter"/>
</dbReference>
<dbReference type="FunFam" id="3.40.50.720:FF:000045">
    <property type="entry name" value="1-deoxy-D-xylulose 5-phosphate reductoisomerase"/>
    <property type="match status" value="1"/>
</dbReference>
<dbReference type="Gene3D" id="1.10.1740.10">
    <property type="match status" value="1"/>
</dbReference>
<dbReference type="Gene3D" id="3.40.50.720">
    <property type="entry name" value="NAD(P)-binding Rossmann-like Domain"/>
    <property type="match status" value="1"/>
</dbReference>
<dbReference type="HAMAP" id="MF_00183">
    <property type="entry name" value="DXP_reductoisom"/>
    <property type="match status" value="1"/>
</dbReference>
<dbReference type="InterPro" id="IPR003821">
    <property type="entry name" value="DXP_reductoisomerase"/>
</dbReference>
<dbReference type="InterPro" id="IPR013644">
    <property type="entry name" value="DXP_reductoisomerase_C"/>
</dbReference>
<dbReference type="InterPro" id="IPR013512">
    <property type="entry name" value="DXP_reductoisomerase_N"/>
</dbReference>
<dbReference type="InterPro" id="IPR026877">
    <property type="entry name" value="DXPR_C"/>
</dbReference>
<dbReference type="InterPro" id="IPR036169">
    <property type="entry name" value="DXPR_C_sf"/>
</dbReference>
<dbReference type="InterPro" id="IPR036291">
    <property type="entry name" value="NAD(P)-bd_dom_sf"/>
</dbReference>
<dbReference type="NCBIfam" id="TIGR00243">
    <property type="entry name" value="Dxr"/>
    <property type="match status" value="1"/>
</dbReference>
<dbReference type="NCBIfam" id="NF009114">
    <property type="entry name" value="PRK12464.1"/>
    <property type="match status" value="1"/>
</dbReference>
<dbReference type="PANTHER" id="PTHR30525">
    <property type="entry name" value="1-DEOXY-D-XYLULOSE 5-PHOSPHATE REDUCTOISOMERASE"/>
    <property type="match status" value="1"/>
</dbReference>
<dbReference type="PANTHER" id="PTHR30525:SF0">
    <property type="entry name" value="1-DEOXY-D-XYLULOSE 5-PHOSPHATE REDUCTOISOMERASE, CHLOROPLASTIC"/>
    <property type="match status" value="1"/>
</dbReference>
<dbReference type="Pfam" id="PF08436">
    <property type="entry name" value="DXP_redisom_C"/>
    <property type="match status" value="1"/>
</dbReference>
<dbReference type="Pfam" id="PF02670">
    <property type="entry name" value="DXP_reductoisom"/>
    <property type="match status" value="1"/>
</dbReference>
<dbReference type="Pfam" id="PF13288">
    <property type="entry name" value="DXPR_C"/>
    <property type="match status" value="1"/>
</dbReference>
<dbReference type="PIRSF" id="PIRSF006205">
    <property type="entry name" value="Dxp_reductismrs"/>
    <property type="match status" value="1"/>
</dbReference>
<dbReference type="SUPFAM" id="SSF69055">
    <property type="entry name" value="1-deoxy-D-xylulose-5-phosphate reductoisomerase, C-terminal domain"/>
    <property type="match status" value="1"/>
</dbReference>
<dbReference type="SUPFAM" id="SSF55347">
    <property type="entry name" value="Glyceraldehyde-3-phosphate dehydrogenase-like, C-terminal domain"/>
    <property type="match status" value="1"/>
</dbReference>
<dbReference type="SUPFAM" id="SSF51735">
    <property type="entry name" value="NAD(P)-binding Rossmann-fold domains"/>
    <property type="match status" value="1"/>
</dbReference>
<protein>
    <recommendedName>
        <fullName evidence="1">1-deoxy-D-xylulose 5-phosphate reductoisomerase</fullName>
        <shortName evidence="1">DXP reductoisomerase</shortName>
        <ecNumber evidence="1">1.1.1.267</ecNumber>
    </recommendedName>
    <alternativeName>
        <fullName evidence="1">1-deoxyxylulose-5-phosphate reductoisomerase</fullName>
    </alternativeName>
    <alternativeName>
        <fullName evidence="1">2-C-methyl-D-erythritol 4-phosphate synthase</fullName>
    </alternativeName>
</protein>